<proteinExistence type="evidence at protein level"/>
<accession>B2RYW9</accession>
<feature type="transit peptide" description="Mitochondrion" evidence="4">
    <location>
        <begin position="1"/>
        <end position="84"/>
    </location>
</feature>
<feature type="chain" id="PRO_0000367321" description="Oxaloacetate tautomerase Fahd2a, mitochondrial" evidence="4">
    <location>
        <begin position="85"/>
        <end position="313"/>
    </location>
</feature>
<feature type="binding site" evidence="3">
    <location>
        <position position="159"/>
    </location>
    <ligand>
        <name>Mg(2+)</name>
        <dbReference type="ChEBI" id="CHEBI:18420"/>
    </ligand>
</feature>
<feature type="binding site" evidence="3">
    <location>
        <position position="161"/>
    </location>
    <ligand>
        <name>Mg(2+)</name>
        <dbReference type="ChEBI" id="CHEBI:18420"/>
    </ligand>
</feature>
<feature type="binding site" evidence="3">
    <location>
        <position position="190"/>
    </location>
    <ligand>
        <name>Mg(2+)</name>
        <dbReference type="ChEBI" id="CHEBI:18420"/>
    </ligand>
</feature>
<feature type="modified residue" description="N6-acetyllysine; alternate" evidence="2">
    <location>
        <position position="202"/>
    </location>
</feature>
<feature type="modified residue" description="N6-succinyllysine; alternate" evidence="2">
    <location>
        <position position="202"/>
    </location>
</feature>
<feature type="modified residue" description="N6-acetyllysine" evidence="2">
    <location>
        <position position="233"/>
    </location>
</feature>
<dbReference type="EC" id="5.3.2.2" evidence="1"/>
<dbReference type="EMBL" id="BC166933">
    <property type="protein sequence ID" value="AAI66933.1"/>
    <property type="molecule type" value="mRNA"/>
</dbReference>
<dbReference type="RefSeq" id="NP_001128306.1">
    <property type="nucleotide sequence ID" value="NM_001134834.2"/>
</dbReference>
<dbReference type="SMR" id="B2RYW9"/>
<dbReference type="FunCoup" id="B2RYW9">
    <property type="interactions" value="178"/>
</dbReference>
<dbReference type="STRING" id="10116.ENSRNOP00000018922"/>
<dbReference type="iPTMnet" id="B2RYW9"/>
<dbReference type="PhosphoSitePlus" id="B2RYW9"/>
<dbReference type="jPOST" id="B2RYW9"/>
<dbReference type="PaxDb" id="10116-ENSRNOP00000018922"/>
<dbReference type="PeptideAtlas" id="B2RYW9"/>
<dbReference type="GeneID" id="296131"/>
<dbReference type="KEGG" id="rno:296131"/>
<dbReference type="UCSC" id="RGD:1563674">
    <property type="organism name" value="rat"/>
</dbReference>
<dbReference type="AGR" id="RGD:1563674"/>
<dbReference type="CTD" id="51011"/>
<dbReference type="RGD" id="1563674">
    <property type="gene designation" value="Fahd2a"/>
</dbReference>
<dbReference type="VEuPathDB" id="HostDB:ENSRNOG00000013974"/>
<dbReference type="eggNOG" id="KOG1535">
    <property type="taxonomic scope" value="Eukaryota"/>
</dbReference>
<dbReference type="HOGENOM" id="CLU_028458_3_2_1"/>
<dbReference type="InParanoid" id="B2RYW9"/>
<dbReference type="OrthoDB" id="42437at9989"/>
<dbReference type="PhylomeDB" id="B2RYW9"/>
<dbReference type="TreeFam" id="TF300911"/>
<dbReference type="PRO" id="PR:B2RYW9"/>
<dbReference type="Proteomes" id="UP000002494">
    <property type="component" value="Chromosome 3"/>
</dbReference>
<dbReference type="Bgee" id="ENSRNOG00000013974">
    <property type="expression patterns" value="Expressed in kidney and 20 other cell types or tissues"/>
</dbReference>
<dbReference type="GO" id="GO:0005739">
    <property type="term" value="C:mitochondrion"/>
    <property type="evidence" value="ECO:0007669"/>
    <property type="project" value="UniProtKB-SubCell"/>
</dbReference>
<dbReference type="GO" id="GO:0046872">
    <property type="term" value="F:metal ion binding"/>
    <property type="evidence" value="ECO:0007669"/>
    <property type="project" value="UniProtKB-KW"/>
</dbReference>
<dbReference type="GO" id="GO:0050163">
    <property type="term" value="F:oxaloacetate tautomerase activity"/>
    <property type="evidence" value="ECO:0000250"/>
    <property type="project" value="UniProtKB"/>
</dbReference>
<dbReference type="GO" id="GO:0006107">
    <property type="term" value="P:oxaloacetate metabolic process"/>
    <property type="evidence" value="ECO:0000250"/>
    <property type="project" value="UniProtKB"/>
</dbReference>
<dbReference type="FunFam" id="3.90.850.10:FF:000029">
    <property type="entry name" value="Fumarylacetoacetate hydrolase domain-containing protein 2A"/>
    <property type="match status" value="1"/>
</dbReference>
<dbReference type="Gene3D" id="3.90.850.10">
    <property type="entry name" value="Fumarylacetoacetase-like, C-terminal domain"/>
    <property type="match status" value="1"/>
</dbReference>
<dbReference type="InterPro" id="IPR051121">
    <property type="entry name" value="FAH"/>
</dbReference>
<dbReference type="InterPro" id="IPR011234">
    <property type="entry name" value="Fumarylacetoacetase-like_C"/>
</dbReference>
<dbReference type="InterPro" id="IPR036663">
    <property type="entry name" value="Fumarylacetoacetase_C_sf"/>
</dbReference>
<dbReference type="PANTHER" id="PTHR42796:SF4">
    <property type="entry name" value="FUMARYLACETOACETATE HYDROLASE DOMAIN-CONTAINING PROTEIN 2A"/>
    <property type="match status" value="1"/>
</dbReference>
<dbReference type="PANTHER" id="PTHR42796">
    <property type="entry name" value="FUMARYLACETOACETATE HYDROLASE DOMAIN-CONTAINING PROTEIN 2A-RELATED"/>
    <property type="match status" value="1"/>
</dbReference>
<dbReference type="Pfam" id="PF01557">
    <property type="entry name" value="FAA_hydrolase"/>
    <property type="match status" value="1"/>
</dbReference>
<dbReference type="SUPFAM" id="SSF56529">
    <property type="entry name" value="FAH"/>
    <property type="match status" value="1"/>
</dbReference>
<comment type="function">
    <text evidence="1">Tautomerase that converts enol-oxaloacetate, a strong inhibitor of succinate dehydrogenase, to the physiological keto form of oxaloacetate. It is thereby required to maximize aerobic respiration efficiency by preventing succinate dehydrogenase inhibition.</text>
</comment>
<comment type="catalytic activity">
    <reaction evidence="1">
        <text>oxaloacetate = enol-oxaloacetate</text>
        <dbReference type="Rhea" id="RHEA:16021"/>
        <dbReference type="ChEBI" id="CHEBI:16452"/>
        <dbReference type="ChEBI" id="CHEBI:17479"/>
        <dbReference type="EC" id="5.3.2.2"/>
    </reaction>
    <physiologicalReaction direction="right-to-left" evidence="1">
        <dbReference type="Rhea" id="RHEA:16023"/>
    </physiologicalReaction>
</comment>
<comment type="cofactor">
    <cofactor evidence="3">
        <name>Mg(2+)</name>
        <dbReference type="ChEBI" id="CHEBI:18420"/>
    </cofactor>
    <cofactor evidence="3">
        <name>Mn(2+)</name>
        <dbReference type="ChEBI" id="CHEBI:29035"/>
    </cofactor>
    <text evidence="3">Requires a divalent metal cation for activity.</text>
</comment>
<comment type="subcellular location">
    <subcellularLocation>
        <location evidence="1">Mitochondrion</location>
    </subcellularLocation>
</comment>
<comment type="similarity">
    <text evidence="5">Belongs to the FAH family.</text>
</comment>
<name>FAH2A_RAT</name>
<evidence type="ECO:0000250" key="1">
    <source>
        <dbReference type="UniProtKB" id="F1MLX0"/>
    </source>
</evidence>
<evidence type="ECO:0000250" key="2">
    <source>
        <dbReference type="UniProtKB" id="Q3TC72"/>
    </source>
</evidence>
<evidence type="ECO:0000250" key="3">
    <source>
        <dbReference type="UniProtKB" id="Q6P587"/>
    </source>
</evidence>
<evidence type="ECO:0000255" key="4"/>
<evidence type="ECO:0000305" key="5"/>
<evidence type="ECO:0000312" key="6">
    <source>
        <dbReference type="RGD" id="1563674"/>
    </source>
</evidence>
<protein>
    <recommendedName>
        <fullName>Oxaloacetate tautomerase Fahd2a, mitochondrial</fullName>
        <ecNumber evidence="1">5.3.2.2</ecNumber>
    </recommendedName>
    <alternativeName>
        <fullName evidence="5">Fumarylacetoacetate hydrolase domain-containing protein 2A</fullName>
    </alternativeName>
</protein>
<reference key="1">
    <citation type="journal article" date="2004" name="Genome Res.">
        <title>The status, quality, and expansion of the NIH full-length cDNA project: the Mammalian Gene Collection (MGC).</title>
        <authorList>
            <consortium name="The MGC Project Team"/>
        </authorList>
    </citation>
    <scope>NUCLEOTIDE SEQUENCE [LARGE SCALE MRNA]</scope>
    <source>
        <tissue>Pituitary anterior lobe</tissue>
    </source>
</reference>
<reference key="2">
    <citation type="submission" date="2009-03" db="UniProtKB">
        <authorList>
            <person name="Maurya D.K."/>
            <person name="Bhargava P."/>
        </authorList>
    </citation>
    <scope>IDENTIFICATION BY MASS SPECTROMETRY</scope>
</reference>
<organism>
    <name type="scientific">Rattus norvegicus</name>
    <name type="common">Rat</name>
    <dbReference type="NCBI Taxonomy" id="10116"/>
    <lineage>
        <taxon>Eukaryota</taxon>
        <taxon>Metazoa</taxon>
        <taxon>Chordata</taxon>
        <taxon>Craniata</taxon>
        <taxon>Vertebrata</taxon>
        <taxon>Euteleostomi</taxon>
        <taxon>Mammalia</taxon>
        <taxon>Eutheria</taxon>
        <taxon>Euarchontoglires</taxon>
        <taxon>Glires</taxon>
        <taxon>Rodentia</taxon>
        <taxon>Myomorpha</taxon>
        <taxon>Muroidea</taxon>
        <taxon>Muridae</taxon>
        <taxon>Murinae</taxon>
        <taxon>Rattus</taxon>
    </lineage>
</organism>
<sequence length="313" mass="34581">MLGSGRRRLLSTLLQVQKRPCQPCRNMRLVQFQAPHLEEPHVGLESGIGGGVVDLNTFDPALPKTMVQFLERGETALSVARRALAAQLPLIPRSQVTFLAPVTRPDKVICVGLNYADHCQEQNVRVPKNPIIFSKFSSSIVGPYDSIILPPESKEVDWEVEMAVVIGKKGKHIKATDVMAYVAGFTVAHDVSARDWQMRNGKQWLLGKTFDTFCPLGPALVTKDTIADPHNLKISCRVNGEIVQSSNTNQMVFKTEDLIAWVSQFVTLYPGDILLTGTPPGVGMFRKPPVFLKKGDEVQCEIEELGVIINKVV</sequence>
<keyword id="KW-0007">Acetylation</keyword>
<keyword id="KW-0413">Isomerase</keyword>
<keyword id="KW-0460">Magnesium</keyword>
<keyword id="KW-0479">Metal-binding</keyword>
<keyword id="KW-0496">Mitochondrion</keyword>
<keyword id="KW-1185">Reference proteome</keyword>
<keyword id="KW-0809">Transit peptide</keyword>
<gene>
    <name evidence="6" type="primary">Fahd2a</name>
</gene>